<feature type="chain" id="PRO_0000157225" description="Protein-export membrane protein SecG">
    <location>
        <begin position="1"/>
        <end position="110"/>
    </location>
</feature>
<feature type="topological domain" description="Periplasmic" evidence="4">
    <location>
        <begin position="1"/>
        <end position="13"/>
    </location>
</feature>
<feature type="transmembrane region" description="Helical" evidence="3">
    <location>
        <begin position="14"/>
        <end position="25"/>
    </location>
</feature>
<feature type="topological domain" description="Cytoplasmic" evidence="4">
    <location>
        <begin position="26"/>
        <end position="50"/>
    </location>
</feature>
<feature type="transmembrane region" description="Helical" evidence="3">
    <location>
        <begin position="51"/>
        <end position="66"/>
    </location>
</feature>
<feature type="topological domain" description="Periplasmic" evidence="4">
    <location>
        <begin position="67"/>
        <end position="110"/>
    </location>
</feature>
<feature type="region of interest" description="Disordered" evidence="1">
    <location>
        <begin position="81"/>
        <end position="110"/>
    </location>
</feature>
<feature type="mutagenesis site" description="Affects activity.">
    <original>T</original>
    <variation>P</variation>
    <location>
        <position position="41"/>
    </location>
</feature>
<feature type="mutagenesis site" description="Affects activity.">
    <original>L</original>
    <variation>P</variation>
    <location>
        <position position="42"/>
    </location>
</feature>
<feature type="mutagenesis site" description="Affects activity.">
    <original>F</original>
    <variation>S</variation>
    <variation>Y</variation>
    <location>
        <position position="43"/>
    </location>
</feature>
<organism>
    <name type="scientific">Escherichia coli (strain K12)</name>
    <dbReference type="NCBI Taxonomy" id="83333"/>
    <lineage>
        <taxon>Bacteria</taxon>
        <taxon>Pseudomonadati</taxon>
        <taxon>Pseudomonadota</taxon>
        <taxon>Gammaproteobacteria</taxon>
        <taxon>Enterobacterales</taxon>
        <taxon>Enterobacteriaceae</taxon>
        <taxon>Escherichia</taxon>
    </lineage>
</organism>
<name>SECG_ECOLI</name>
<reference key="1">
    <citation type="journal article" date="1993" name="EMBO J.">
        <title>A novel membrane protein involved in protein translocation across the cytoplasmic membrane of Escherichia coli.</title>
        <authorList>
            <person name="Nishiyama K."/>
            <person name="Mizushima S."/>
            <person name="Tokuda H."/>
        </authorList>
    </citation>
    <scope>NUCLEOTIDE SEQUENCE [GENOMIC DNA]</scope>
    <scope>PROTEIN SEQUENCE OF 95-110</scope>
    <scope>CHARACTERIZATION</scope>
</reference>
<reference key="2">
    <citation type="journal article" date="1993" name="J. Bacteriol.">
        <title>The dihydropteroate synthase gene, folP, is near the leucine tRNA gene, leuU, on the Escherichia coli chromosome.</title>
        <authorList>
            <person name="Dallas W.S."/>
            <person name="Dev I.K."/>
            <person name="Ray P.H."/>
        </authorList>
    </citation>
    <scope>NUCLEOTIDE SEQUENCE [GENOMIC DNA]</scope>
    <source>
        <strain>K12 / W3110 / ATCC 27325 / DSM 5911</strain>
    </source>
</reference>
<reference key="3">
    <citation type="submission" date="1993-09" db="EMBL/GenBank/DDBJ databases">
        <authorList>
            <person name="Wang R."/>
            <person name="Kushner S.R."/>
        </authorList>
    </citation>
    <scope>NUCLEOTIDE SEQUENCE [GENOMIC DNA]</scope>
    <source>
        <strain>K12</strain>
    </source>
</reference>
<reference key="4">
    <citation type="journal article" date="1997" name="Science">
        <title>The complete genome sequence of Escherichia coli K-12.</title>
        <authorList>
            <person name="Blattner F.R."/>
            <person name="Plunkett G. III"/>
            <person name="Bloch C.A."/>
            <person name="Perna N.T."/>
            <person name="Burland V."/>
            <person name="Riley M."/>
            <person name="Collado-Vides J."/>
            <person name="Glasner J.D."/>
            <person name="Rode C.K."/>
            <person name="Mayhew G.F."/>
            <person name="Gregor J."/>
            <person name="Davis N.W."/>
            <person name="Kirkpatrick H.A."/>
            <person name="Goeden M.A."/>
            <person name="Rose D.J."/>
            <person name="Mau B."/>
            <person name="Shao Y."/>
        </authorList>
    </citation>
    <scope>NUCLEOTIDE SEQUENCE [LARGE SCALE GENOMIC DNA]</scope>
    <source>
        <strain>K12 / MG1655 / ATCC 47076</strain>
    </source>
</reference>
<reference key="5">
    <citation type="journal article" date="2006" name="Mol. Syst. Biol.">
        <title>Highly accurate genome sequences of Escherichia coli K-12 strains MG1655 and W3110.</title>
        <authorList>
            <person name="Hayashi K."/>
            <person name="Morooka N."/>
            <person name="Yamamoto Y."/>
            <person name="Fujita K."/>
            <person name="Isono K."/>
            <person name="Choi S."/>
            <person name="Ohtsubo E."/>
            <person name="Baba T."/>
            <person name="Wanner B.L."/>
            <person name="Mori H."/>
            <person name="Horiuchi T."/>
        </authorList>
    </citation>
    <scope>NUCLEOTIDE SEQUENCE [LARGE SCALE GENOMIC DNA]</scope>
    <source>
        <strain>K12 / W3110 / ATCC 27325 / DSM 5911</strain>
    </source>
</reference>
<reference key="6">
    <citation type="journal article" date="1994" name="EMBO J.">
        <title>Disruption of the gene encoding p12 (SecG) reveals the direct involvement and important function of SecG in the protein translocation of Escherichia coli at low temperature.</title>
        <authorList>
            <person name="Nishiyama K."/>
            <person name="Hanada M."/>
            <person name="Tokuda H."/>
        </authorList>
    </citation>
    <scope>CHARACTERIZATION</scope>
</reference>
<reference key="7">
    <citation type="journal article" date="1994" name="J. Biol. Chem.">
        <title>Band 1 subunit of Escherichia coli preportein translocase and integral membrane export factor P12 are the same protein.</title>
        <authorList>
            <person name="Douville K."/>
            <person name="Leonard M."/>
            <person name="Brundage L."/>
            <person name="Nishiyama K."/>
            <person name="Tokuda H."/>
            <person name="Mizushima S."/>
            <person name="Wickner W."/>
        </authorList>
    </citation>
    <scope>CHARACTERIZATION</scope>
</reference>
<reference key="8">
    <citation type="journal article" date="1995" name="EMBO J.">
        <title>A new genetic selection identifies essential residues in SecG, a component of the Escherichia coli protein export machinery.</title>
        <authorList>
            <person name="Bost S."/>
            <person name="Belin D."/>
        </authorList>
    </citation>
    <scope>MUTANTS</scope>
</reference>
<reference key="9">
    <citation type="journal article" date="2005" name="Science">
        <title>Global topology analysis of the Escherichia coli inner membrane proteome.</title>
        <authorList>
            <person name="Daley D.O."/>
            <person name="Rapp M."/>
            <person name="Granseth E."/>
            <person name="Melen K."/>
            <person name="Drew D."/>
            <person name="von Heijne G."/>
        </authorList>
    </citation>
    <scope>TOPOLOGY [LARGE SCALE ANALYSIS]</scope>
    <source>
        <strain>K12 / MG1655 / ATCC 47076</strain>
    </source>
</reference>
<reference key="10">
    <citation type="journal article" date="2009" name="Science">
        <title>Effects of antibiotics and a proto-oncogene homolog on destruction of protein translocator SecY.</title>
        <authorList>
            <person name="van Stelten J."/>
            <person name="Silva F."/>
            <person name="Belin D."/>
            <person name="Silhavy T.J."/>
        </authorList>
    </citation>
    <scope>COMPLEX DEGRADATION</scope>
    <source>
        <strain>K12 / MC4100</strain>
    </source>
</reference>
<reference key="11">
    <citation type="journal article" date="2016" name="Biochem. J.">
        <title>Membrane protein insertion and assembly by the bacterial holo-translocon SecYEG-SecDF-YajC-YidC.</title>
        <authorList>
            <person name="Komar J."/>
            <person name="Alvira S."/>
            <person name="Schulze R.J."/>
            <person name="Martin R."/>
            <person name="Lycklama a Nijeholt J.A."/>
            <person name="Lee S.C."/>
            <person name="Dafforn T.R."/>
            <person name="Deckers-Hebestreit G."/>
            <person name="Berger I."/>
            <person name="Schaffitzel C."/>
            <person name="Collinson I."/>
        </authorList>
    </citation>
    <scope>FUNCTION</scope>
    <scope>SUBUNIT</scope>
    <scope>SUBCELLULAR LOCATION</scope>
    <source>
        <strain>BL21-DE3</strain>
    </source>
</reference>
<reference key="12">
    <citation type="journal article" date="2005" name="Nature">
        <title>Structure of the E. coli protein-conducting channel bound to a translating ribosome.</title>
        <authorList>
            <person name="Mitra K."/>
            <person name="Schaffitzel C."/>
            <person name="Shaikh T."/>
            <person name="Tama F."/>
            <person name="Jenni S."/>
            <person name="Brooks C.L. III"/>
            <person name="Ban N."/>
            <person name="Frank J."/>
        </authorList>
    </citation>
    <scope>STRUCTURE BY ELECTRON MICROSCOPY (14.9 ANGSTROMS) OF 1-77 IN COMPLEX WITH THE RIBOSOME</scope>
    <scope>A NASCENT POLYPEPTIDE CHAIN</scope>
    <source>
        <strain>MRE-600</strain>
    </source>
</reference>
<reference key="13">
    <citation type="journal article" date="2008" name="Annu. Rev. Biochem.">
        <title>Protein translocation across the bacterial cytoplasmic membrane.</title>
        <authorList>
            <person name="Driessen A.J."/>
            <person name="Nouwen N."/>
        </authorList>
    </citation>
    <scope>REVIEW</scope>
</reference>
<proteinExistence type="evidence at protein level"/>
<protein>
    <recommendedName>
        <fullName>Protein-export membrane protein SecG</fullName>
    </recommendedName>
    <alternativeName>
        <fullName>P12</fullName>
    </alternativeName>
    <alternativeName>
        <fullName>Preprotein translocase band 1 subunit</fullName>
    </alternativeName>
</protein>
<dbReference type="EMBL" id="D16463">
    <property type="protein sequence ID" value="BAA03930.1"/>
    <property type="molecule type" value="Genomic_DNA"/>
</dbReference>
<dbReference type="EMBL" id="L12968">
    <property type="status" value="NOT_ANNOTATED_CDS"/>
    <property type="molecule type" value="Unassigned_DNA"/>
</dbReference>
<dbReference type="EMBL" id="U01376">
    <property type="protein sequence ID" value="AAA97511.1"/>
    <property type="molecule type" value="Genomic_DNA"/>
</dbReference>
<dbReference type="EMBL" id="U18997">
    <property type="protein sequence ID" value="AAA57976.1"/>
    <property type="molecule type" value="Genomic_DNA"/>
</dbReference>
<dbReference type="EMBL" id="U00096">
    <property type="protein sequence ID" value="AAC76207.1"/>
    <property type="molecule type" value="Genomic_DNA"/>
</dbReference>
<dbReference type="EMBL" id="AP009048">
    <property type="protein sequence ID" value="BAE77219.1"/>
    <property type="molecule type" value="Genomic_DNA"/>
</dbReference>
<dbReference type="PIR" id="S40402">
    <property type="entry name" value="S40402"/>
</dbReference>
<dbReference type="RefSeq" id="NP_417642.1">
    <property type="nucleotide sequence ID" value="NC_000913.3"/>
</dbReference>
<dbReference type="RefSeq" id="WP_001295556.1">
    <property type="nucleotide sequence ID" value="NZ_SSZK01000007.1"/>
</dbReference>
<dbReference type="PDB" id="2AKH">
    <property type="method" value="EM"/>
    <property type="resolution" value="14.90 A"/>
    <property type="chains" value="A/X=1-77"/>
</dbReference>
<dbReference type="PDB" id="2AKI">
    <property type="method" value="EM"/>
    <property type="resolution" value="14.90 A"/>
    <property type="chains" value="A/X=1-77"/>
</dbReference>
<dbReference type="PDB" id="3J45">
    <property type="method" value="EM"/>
    <property type="resolution" value="9.50 A"/>
    <property type="chains" value="G=9-73"/>
</dbReference>
<dbReference type="PDB" id="3J46">
    <property type="method" value="EM"/>
    <property type="resolution" value="10.10 A"/>
    <property type="chains" value="G=9-73"/>
</dbReference>
<dbReference type="PDB" id="5MG3">
    <property type="method" value="EM"/>
    <property type="resolution" value="14.00 A"/>
    <property type="chains" value="G=1-110"/>
</dbReference>
<dbReference type="PDB" id="5NCO">
    <property type="method" value="EM"/>
    <property type="resolution" value="4.80 A"/>
    <property type="chains" value="j=1-71"/>
</dbReference>
<dbReference type="PDBsum" id="2AKH"/>
<dbReference type="PDBsum" id="2AKI"/>
<dbReference type="PDBsum" id="3J45"/>
<dbReference type="PDBsum" id="3J46"/>
<dbReference type="PDBsum" id="5MG3"/>
<dbReference type="PDBsum" id="5NCO"/>
<dbReference type="EMDB" id="EMD-3506"/>
<dbReference type="EMDB" id="EMD-3617"/>
<dbReference type="EMDB" id="EMD-5693"/>
<dbReference type="SMR" id="P0AG99"/>
<dbReference type="BioGRID" id="4259584">
    <property type="interactions" value="379"/>
</dbReference>
<dbReference type="BioGRID" id="852033">
    <property type="interactions" value="1"/>
</dbReference>
<dbReference type="ComplexPortal" id="CPX-1095">
    <property type="entry name" value="Holo-translocon SecYEG-SecDF-YajC-YidC complex"/>
</dbReference>
<dbReference type="ComplexPortal" id="CPX-1096">
    <property type="entry name" value="Protein-conducting channel SecYEG complex"/>
</dbReference>
<dbReference type="DIP" id="DIP-47480N"/>
<dbReference type="FunCoup" id="P0AG99">
    <property type="interactions" value="358"/>
</dbReference>
<dbReference type="IntAct" id="P0AG99">
    <property type="interactions" value="4"/>
</dbReference>
<dbReference type="MINT" id="P0AG99"/>
<dbReference type="STRING" id="511145.b3175"/>
<dbReference type="TCDB" id="3.A.5.1.1">
    <property type="family name" value="the general secretory pathway (sec) family"/>
</dbReference>
<dbReference type="jPOST" id="P0AG99"/>
<dbReference type="PaxDb" id="511145-b3175"/>
<dbReference type="EnsemblBacteria" id="AAC76207">
    <property type="protein sequence ID" value="AAC76207"/>
    <property type="gene ID" value="b3175"/>
</dbReference>
<dbReference type="GeneID" id="93778806"/>
<dbReference type="GeneID" id="947720"/>
<dbReference type="KEGG" id="ecj:JW3142"/>
<dbReference type="KEGG" id="eco:b3175"/>
<dbReference type="KEGG" id="ecoc:C3026_17290"/>
<dbReference type="PATRIC" id="fig|1411691.4.peg.3557"/>
<dbReference type="EchoBASE" id="EB2019"/>
<dbReference type="eggNOG" id="COG1314">
    <property type="taxonomic scope" value="Bacteria"/>
</dbReference>
<dbReference type="HOGENOM" id="CLU_094156_2_2_6"/>
<dbReference type="InParanoid" id="P0AG99"/>
<dbReference type="OMA" id="MYEVLMV"/>
<dbReference type="OrthoDB" id="9813947at2"/>
<dbReference type="PhylomeDB" id="P0AG99"/>
<dbReference type="BioCyc" id="EcoCyc:SECG"/>
<dbReference type="BioCyc" id="MetaCyc:SECG"/>
<dbReference type="EvolutionaryTrace" id="P0AG99"/>
<dbReference type="PRO" id="PR:P0AG99"/>
<dbReference type="Proteomes" id="UP000000625">
    <property type="component" value="Chromosome"/>
</dbReference>
<dbReference type="GO" id="GO:0031522">
    <property type="term" value="C:cell envelope Sec protein transport complex"/>
    <property type="evidence" value="ECO:0000314"/>
    <property type="project" value="EcoCyc"/>
</dbReference>
<dbReference type="GO" id="GO:0016020">
    <property type="term" value="C:membrane"/>
    <property type="evidence" value="ECO:0000314"/>
    <property type="project" value="ComplexPortal"/>
</dbReference>
<dbReference type="GO" id="GO:0005886">
    <property type="term" value="C:plasma membrane"/>
    <property type="evidence" value="ECO:0000314"/>
    <property type="project" value="EcoliWiki"/>
</dbReference>
<dbReference type="GO" id="GO:0008320">
    <property type="term" value="F:protein transmembrane transporter activity"/>
    <property type="evidence" value="ECO:0000314"/>
    <property type="project" value="EcoCyc"/>
</dbReference>
<dbReference type="GO" id="GO:0015450">
    <property type="term" value="F:protein-transporting ATPase activity"/>
    <property type="evidence" value="ECO:0007669"/>
    <property type="project" value="InterPro"/>
</dbReference>
<dbReference type="GO" id="GO:0065002">
    <property type="term" value="P:intracellular protein transmembrane transport"/>
    <property type="evidence" value="ECO:0000314"/>
    <property type="project" value="EcoliWiki"/>
</dbReference>
<dbReference type="GO" id="GO:0006886">
    <property type="term" value="P:intracellular protein transport"/>
    <property type="evidence" value="ECO:0000314"/>
    <property type="project" value="EcoliWiki"/>
</dbReference>
<dbReference type="GO" id="GO:0032978">
    <property type="term" value="P:protein insertion into membrane from inner side"/>
    <property type="evidence" value="ECO:0000314"/>
    <property type="project" value="EcoCyc"/>
</dbReference>
<dbReference type="GO" id="GO:0009306">
    <property type="term" value="P:protein secretion"/>
    <property type="evidence" value="ECO:0007669"/>
    <property type="project" value="InterPro"/>
</dbReference>
<dbReference type="GO" id="GO:0043952">
    <property type="term" value="P:protein transport by the Sec complex"/>
    <property type="evidence" value="ECO:0000314"/>
    <property type="project" value="ComplexPortal"/>
</dbReference>
<dbReference type="GO" id="GO:0006616">
    <property type="term" value="P:SRP-dependent cotranslational protein targeting to membrane, translocation"/>
    <property type="evidence" value="ECO:0000314"/>
    <property type="project" value="EcoCyc"/>
</dbReference>
<dbReference type="InterPro" id="IPR004692">
    <property type="entry name" value="SecG"/>
</dbReference>
<dbReference type="NCBIfam" id="TIGR00810">
    <property type="entry name" value="secG"/>
    <property type="match status" value="1"/>
</dbReference>
<dbReference type="PANTHER" id="PTHR34182">
    <property type="entry name" value="PROTEIN-EXPORT MEMBRANE PROTEIN SECG"/>
    <property type="match status" value="1"/>
</dbReference>
<dbReference type="PANTHER" id="PTHR34182:SF1">
    <property type="entry name" value="PROTEIN-EXPORT MEMBRANE PROTEIN SECG"/>
    <property type="match status" value="1"/>
</dbReference>
<dbReference type="Pfam" id="PF03840">
    <property type="entry name" value="SecG"/>
    <property type="match status" value="1"/>
</dbReference>
<dbReference type="PRINTS" id="PR01651">
    <property type="entry name" value="SECGEXPORT"/>
</dbReference>
<keyword id="KW-0002">3D-structure</keyword>
<keyword id="KW-0997">Cell inner membrane</keyword>
<keyword id="KW-1003">Cell membrane</keyword>
<keyword id="KW-0903">Direct protein sequencing</keyword>
<keyword id="KW-0472">Membrane</keyword>
<keyword id="KW-0653">Protein transport</keyword>
<keyword id="KW-1185">Reference proteome</keyword>
<keyword id="KW-0811">Translocation</keyword>
<keyword id="KW-0812">Transmembrane</keyword>
<keyword id="KW-1133">Transmembrane helix</keyword>
<keyword id="KW-0813">Transport</keyword>
<gene>
    <name type="primary">secG</name>
    <name type="ordered locus">b3175</name>
    <name type="ordered locus">JW3142</name>
</gene>
<evidence type="ECO:0000256" key="1">
    <source>
        <dbReference type="SAM" id="MobiDB-lite"/>
    </source>
</evidence>
<evidence type="ECO:0000269" key="2">
    <source>
    </source>
</evidence>
<evidence type="ECO:0000305" key="3"/>
<evidence type="ECO:0000305" key="4">
    <source>
    </source>
</evidence>
<comment type="function">
    <text>Subunit of the protein translocation channel SecYEG. Overexpression of some hybrid proteins has been thought to jam the protein secretion apparatus resulting in cell death; while this may be true it also results in FtsH-mediated degradation of SecY. Treatment with antibiotics that block translation elongation such as chloramphenicol also leads to degradation of SecY and SecE but not SecG.</text>
</comment>
<comment type="subunit">
    <text evidence="2">Component of the Sec protein translocase complex. Heterotrimer consisting of SecY, SecE and SecG subunits. The heterotrimers can form oligomers, although 1 heterotrimer is thought to be able to translocate proteins. The SecDF-YidC-YajC translocase forms a supercomplex with SecYEG, called the holo-translocon (HTL) (PubMed:27435098). The stoichiometry of the super complex may be SecYEG:YidC:SecDF 4:3:1, YajC is in the reconstituted complex (with SecDF) but as no antibody is available it could not be quantified (PubMed:27435098). SecG probably contacts ribosomal protein L23 and/or L29 when the translocation complex is docked with the ribosome.</text>
</comment>
<comment type="interaction">
    <interactant intactId="EBI-6404248">
        <id>P0AG99</id>
    </interactant>
    <interactant intactId="EBI-543213">
        <id>P10408</id>
        <label>secA</label>
    </interactant>
    <organismsDiffer>false</organismsDiffer>
    <experiments>3</experiments>
</comment>
<comment type="interaction">
    <interactant intactId="EBI-6404248">
        <id>P0AG99</id>
    </interactant>
    <interactant intactId="EBI-761422">
        <id>P0AGA2</id>
        <label>secY</label>
    </interactant>
    <organismsDiffer>false</organismsDiffer>
    <experiments>3</experiments>
</comment>
<comment type="subcellular location">
    <subcellularLocation>
        <location>Cell inner membrane</location>
        <topology>Multi-pass membrane protein</topology>
    </subcellularLocation>
</comment>
<comment type="PTM">
    <text>The N-terminus is blocked.</text>
</comment>
<comment type="similarity">
    <text evidence="3">Belongs to the SecG family.</text>
</comment>
<accession>P0AG99</accession>
<accession>P33582</accession>
<accession>Q2M937</accession>
<sequence length="110" mass="11365">MYEALLVVFLIVAIGLVGLIMLQQGKGADMGASFGAGASATLFGSSGSGNFMTRMTALLATLFFIISLVLGNINSNKTNKGSEWENLSAPAKTEQTQPAAPAKPTSDIPN</sequence>